<accession>B0TJ37</accession>
<organism>
    <name type="scientific">Shewanella halifaxensis (strain HAW-EB4)</name>
    <dbReference type="NCBI Taxonomy" id="458817"/>
    <lineage>
        <taxon>Bacteria</taxon>
        <taxon>Pseudomonadati</taxon>
        <taxon>Pseudomonadota</taxon>
        <taxon>Gammaproteobacteria</taxon>
        <taxon>Alteromonadales</taxon>
        <taxon>Shewanellaceae</taxon>
        <taxon>Shewanella</taxon>
    </lineage>
</organism>
<gene>
    <name evidence="1" type="primary">prmA</name>
    <name type="ordered locus">Shal_3900</name>
</gene>
<name>PRMA_SHEHH</name>
<keyword id="KW-0963">Cytoplasm</keyword>
<keyword id="KW-0489">Methyltransferase</keyword>
<keyword id="KW-0949">S-adenosyl-L-methionine</keyword>
<keyword id="KW-0808">Transferase</keyword>
<proteinExistence type="inferred from homology"/>
<comment type="function">
    <text evidence="1">Methylates ribosomal protein L11.</text>
</comment>
<comment type="catalytic activity">
    <reaction evidence="1">
        <text>L-lysyl-[protein] + 3 S-adenosyl-L-methionine = N(6),N(6),N(6)-trimethyl-L-lysyl-[protein] + 3 S-adenosyl-L-homocysteine + 3 H(+)</text>
        <dbReference type="Rhea" id="RHEA:54192"/>
        <dbReference type="Rhea" id="RHEA-COMP:9752"/>
        <dbReference type="Rhea" id="RHEA-COMP:13826"/>
        <dbReference type="ChEBI" id="CHEBI:15378"/>
        <dbReference type="ChEBI" id="CHEBI:29969"/>
        <dbReference type="ChEBI" id="CHEBI:57856"/>
        <dbReference type="ChEBI" id="CHEBI:59789"/>
        <dbReference type="ChEBI" id="CHEBI:61961"/>
    </reaction>
</comment>
<comment type="subcellular location">
    <subcellularLocation>
        <location evidence="1">Cytoplasm</location>
    </subcellularLocation>
</comment>
<comment type="similarity">
    <text evidence="1">Belongs to the methyltransferase superfamily. PrmA family.</text>
</comment>
<sequence>MPWIQLRIDTDGPHADAISDQLMEEGSLSITFEDGKDSPIYEPTLGETPLWNHTVIIALFEANFDLSPVVERLKQLPCLGENFSYKIEQVEDKDWEREWMDNFHPIKFGDRLWICPSWREIPDPTAVNVILDPGLAFGTGTHPTTALCLEWLDGLDYSNKDVIDFGCGSGILAVAALKLGAERVTGIDIDYQAIEASKANAERNGVQDKLELYLPEDQPADLLADILVANILAGPLRELAPLIAEKVKPGGLLALSGLLQEQAEEVSAFYSQWFDMDEPAHKDDWSRLTGVRK</sequence>
<reference key="1">
    <citation type="submission" date="2008-01" db="EMBL/GenBank/DDBJ databases">
        <title>Complete sequence of Shewanella halifaxensis HAW-EB4.</title>
        <authorList>
            <consortium name="US DOE Joint Genome Institute"/>
            <person name="Copeland A."/>
            <person name="Lucas S."/>
            <person name="Lapidus A."/>
            <person name="Glavina del Rio T."/>
            <person name="Dalin E."/>
            <person name="Tice H."/>
            <person name="Bruce D."/>
            <person name="Goodwin L."/>
            <person name="Pitluck S."/>
            <person name="Sims D."/>
            <person name="Brettin T."/>
            <person name="Detter J.C."/>
            <person name="Han C."/>
            <person name="Kuske C.R."/>
            <person name="Schmutz J."/>
            <person name="Larimer F."/>
            <person name="Land M."/>
            <person name="Hauser L."/>
            <person name="Kyrpides N."/>
            <person name="Kim E."/>
            <person name="Zhao J.-S."/>
            <person name="Richardson P."/>
        </authorList>
    </citation>
    <scope>NUCLEOTIDE SEQUENCE [LARGE SCALE GENOMIC DNA]</scope>
    <source>
        <strain>HAW-EB4</strain>
    </source>
</reference>
<evidence type="ECO:0000255" key="1">
    <source>
        <dbReference type="HAMAP-Rule" id="MF_00735"/>
    </source>
</evidence>
<protein>
    <recommendedName>
        <fullName evidence="1">Ribosomal protein L11 methyltransferase</fullName>
        <shortName evidence="1">L11 Mtase</shortName>
        <ecNumber evidence="1">2.1.1.-</ecNumber>
    </recommendedName>
</protein>
<dbReference type="EC" id="2.1.1.-" evidence="1"/>
<dbReference type="EMBL" id="CP000931">
    <property type="protein sequence ID" value="ABZ78440.1"/>
    <property type="molecule type" value="Genomic_DNA"/>
</dbReference>
<dbReference type="RefSeq" id="WP_012278957.1">
    <property type="nucleotide sequence ID" value="NC_010334.1"/>
</dbReference>
<dbReference type="SMR" id="B0TJ37"/>
<dbReference type="STRING" id="458817.Shal_3900"/>
<dbReference type="KEGG" id="shl:Shal_3900"/>
<dbReference type="eggNOG" id="COG2264">
    <property type="taxonomic scope" value="Bacteria"/>
</dbReference>
<dbReference type="HOGENOM" id="CLU_049382_4_1_6"/>
<dbReference type="OrthoDB" id="9785995at2"/>
<dbReference type="Proteomes" id="UP000001317">
    <property type="component" value="Chromosome"/>
</dbReference>
<dbReference type="GO" id="GO:0005829">
    <property type="term" value="C:cytosol"/>
    <property type="evidence" value="ECO:0007669"/>
    <property type="project" value="TreeGrafter"/>
</dbReference>
<dbReference type="GO" id="GO:0016279">
    <property type="term" value="F:protein-lysine N-methyltransferase activity"/>
    <property type="evidence" value="ECO:0007669"/>
    <property type="project" value="TreeGrafter"/>
</dbReference>
<dbReference type="GO" id="GO:0032259">
    <property type="term" value="P:methylation"/>
    <property type="evidence" value="ECO:0007669"/>
    <property type="project" value="UniProtKB-KW"/>
</dbReference>
<dbReference type="CDD" id="cd02440">
    <property type="entry name" value="AdoMet_MTases"/>
    <property type="match status" value="1"/>
</dbReference>
<dbReference type="Gene3D" id="3.40.50.150">
    <property type="entry name" value="Vaccinia Virus protein VP39"/>
    <property type="match status" value="1"/>
</dbReference>
<dbReference type="HAMAP" id="MF_00735">
    <property type="entry name" value="Methyltr_PrmA"/>
    <property type="match status" value="1"/>
</dbReference>
<dbReference type="InterPro" id="IPR050078">
    <property type="entry name" value="Ribosomal_L11_MeTrfase_PrmA"/>
</dbReference>
<dbReference type="InterPro" id="IPR004498">
    <property type="entry name" value="Ribosomal_PrmA_MeTrfase"/>
</dbReference>
<dbReference type="InterPro" id="IPR029063">
    <property type="entry name" value="SAM-dependent_MTases_sf"/>
</dbReference>
<dbReference type="NCBIfam" id="TIGR00406">
    <property type="entry name" value="prmA"/>
    <property type="match status" value="1"/>
</dbReference>
<dbReference type="PANTHER" id="PTHR43648">
    <property type="entry name" value="ELECTRON TRANSFER FLAVOPROTEIN BETA SUBUNIT LYSINE METHYLTRANSFERASE"/>
    <property type="match status" value="1"/>
</dbReference>
<dbReference type="PANTHER" id="PTHR43648:SF1">
    <property type="entry name" value="ELECTRON TRANSFER FLAVOPROTEIN BETA SUBUNIT LYSINE METHYLTRANSFERASE"/>
    <property type="match status" value="1"/>
</dbReference>
<dbReference type="Pfam" id="PF06325">
    <property type="entry name" value="PrmA"/>
    <property type="match status" value="1"/>
</dbReference>
<dbReference type="PIRSF" id="PIRSF000401">
    <property type="entry name" value="RPL11_MTase"/>
    <property type="match status" value="1"/>
</dbReference>
<dbReference type="SUPFAM" id="SSF53335">
    <property type="entry name" value="S-adenosyl-L-methionine-dependent methyltransferases"/>
    <property type="match status" value="1"/>
</dbReference>
<feature type="chain" id="PRO_1000083360" description="Ribosomal protein L11 methyltransferase">
    <location>
        <begin position="1"/>
        <end position="293"/>
    </location>
</feature>
<feature type="binding site" evidence="1">
    <location>
        <position position="145"/>
    </location>
    <ligand>
        <name>S-adenosyl-L-methionine</name>
        <dbReference type="ChEBI" id="CHEBI:59789"/>
    </ligand>
</feature>
<feature type="binding site" evidence="1">
    <location>
        <position position="166"/>
    </location>
    <ligand>
        <name>S-adenosyl-L-methionine</name>
        <dbReference type="ChEBI" id="CHEBI:59789"/>
    </ligand>
</feature>
<feature type="binding site" evidence="1">
    <location>
        <position position="188"/>
    </location>
    <ligand>
        <name>S-adenosyl-L-methionine</name>
        <dbReference type="ChEBI" id="CHEBI:59789"/>
    </ligand>
</feature>
<feature type="binding site" evidence="1">
    <location>
        <position position="230"/>
    </location>
    <ligand>
        <name>S-adenosyl-L-methionine</name>
        <dbReference type="ChEBI" id="CHEBI:59789"/>
    </ligand>
</feature>